<feature type="chain" id="PRO_0000247580" description="Hemoglobin subunit beta-1">
    <location>
        <begin position="1" status="less than"/>
        <end position="132"/>
    </location>
</feature>
<feature type="domain" description="Globin" evidence="2">
    <location>
        <begin position="1"/>
        <end position="132"/>
    </location>
</feature>
<feature type="binding site" description="distal binding residue" evidence="1 2">
    <location>
        <position position="49"/>
    </location>
    <ligand>
        <name>heme b</name>
        <dbReference type="ChEBI" id="CHEBI:60344"/>
    </ligand>
    <ligandPart>
        <name>Fe</name>
        <dbReference type="ChEBI" id="CHEBI:18248"/>
    </ligandPart>
</feature>
<feature type="binding site" description="proximal binding residue" evidence="1 2">
    <location>
        <position position="78"/>
    </location>
    <ligand>
        <name>heme b</name>
        <dbReference type="ChEBI" id="CHEBI:60344"/>
    </ligand>
    <ligandPart>
        <name>Fe</name>
        <dbReference type="ChEBI" id="CHEBI:18248"/>
    </ligandPart>
</feature>
<feature type="non-terminal residue" evidence="5">
    <location>
        <position position="1"/>
    </location>
</feature>
<keyword id="KW-0349">Heme</keyword>
<keyword id="KW-0408">Iron</keyword>
<keyword id="KW-0479">Metal-binding</keyword>
<keyword id="KW-0561">Oxygen transport</keyword>
<keyword id="KW-0813">Transport</keyword>
<reference evidence="4 5" key="1">
    <citation type="journal article" date="2006" name="J. Biol. Chem.">
        <title>The oxygen transport system in three species of the boreal fish family Gadidae. Molecular phylogeny of hemoglobin.</title>
        <authorList>
            <person name="Verde C."/>
            <person name="Balestrieri M."/>
            <person name="de Pascale D."/>
            <person name="Pagnozzi D."/>
            <person name="Lecointre G."/>
            <person name="di Prisco G."/>
        </authorList>
    </citation>
    <scope>NUCLEOTIDE SEQUENCE [MRNA]</scope>
    <scope>FUNCTION</scope>
    <scope>SUBUNIT</scope>
    <source>
        <tissue evidence="3">Spleen</tissue>
    </source>
</reference>
<protein>
    <recommendedName>
        <fullName>Hemoglobin subunit beta-1</fullName>
    </recommendedName>
    <alternativeName>
        <fullName>Beta-1-globin</fullName>
    </alternativeName>
    <alternativeName>
        <fullName>Hemoglobin beta-1 chain</fullName>
    </alternativeName>
</protein>
<accession>Q1AGS3</accession>
<organism>
    <name type="scientific">Arctogadus glacialis</name>
    <name type="common">Arctic cod</name>
    <dbReference type="NCBI Taxonomy" id="185735"/>
    <lineage>
        <taxon>Eukaryota</taxon>
        <taxon>Metazoa</taxon>
        <taxon>Chordata</taxon>
        <taxon>Craniata</taxon>
        <taxon>Vertebrata</taxon>
        <taxon>Euteleostomi</taxon>
        <taxon>Actinopterygii</taxon>
        <taxon>Neopterygii</taxon>
        <taxon>Teleostei</taxon>
        <taxon>Neoteleostei</taxon>
        <taxon>Acanthomorphata</taxon>
        <taxon>Zeiogadaria</taxon>
        <taxon>Gadariae</taxon>
        <taxon>Gadiformes</taxon>
        <taxon>Gadoidei</taxon>
        <taxon>Gadidae</taxon>
        <taxon>Arctogadus</taxon>
    </lineage>
</organism>
<proteinExistence type="evidence at protein level"/>
<comment type="function">
    <text evidence="3 4">Involved in oxygen transport from gills to the various peripheral tissues.</text>
</comment>
<comment type="subunit">
    <text evidence="3">Hb 1 is a heterotetramer of two alpha-1 and two beta-1 chains. Hb 2 is a heterotetramer of two alpha-2 and two beta-1 chains.</text>
</comment>
<comment type="tissue specificity">
    <text evidence="4">Red blood cells.</text>
</comment>
<comment type="similarity">
    <text evidence="2">Belongs to the globin family.</text>
</comment>
<evidence type="ECO:0000250" key="1">
    <source>
        <dbReference type="UniProtKB" id="P45720"/>
    </source>
</evidence>
<evidence type="ECO:0000255" key="2">
    <source>
        <dbReference type="PROSITE-ProRule" id="PRU00238"/>
    </source>
</evidence>
<evidence type="ECO:0000269" key="3">
    <source>
    </source>
</evidence>
<evidence type="ECO:0000305" key="4"/>
<evidence type="ECO:0000312" key="5">
    <source>
        <dbReference type="EMBL" id="AAZ99828.1"/>
    </source>
</evidence>
<gene>
    <name type="primary">hbb1</name>
</gene>
<name>HBB1_ARCGL</name>
<sequence>WSKIDIDVCGPLALQRCLIVYPWTQRYFGSFGDLSTVAAIMGNPKVAQHGVVALTGLRTALDHMDEIKSTYAALSVLHSEKLHVDPDNFRLLCECLTIVIAGKMGKKLSPDMQAAWQKYLCAVVSALGRQYH</sequence>
<dbReference type="EMBL" id="DQ125476">
    <property type="protein sequence ID" value="AAZ99828.1"/>
    <property type="molecule type" value="mRNA"/>
</dbReference>
<dbReference type="SMR" id="Q1AGS3"/>
<dbReference type="GO" id="GO:0072562">
    <property type="term" value="C:blood microparticle"/>
    <property type="evidence" value="ECO:0007669"/>
    <property type="project" value="TreeGrafter"/>
</dbReference>
<dbReference type="GO" id="GO:0031838">
    <property type="term" value="C:haptoglobin-hemoglobin complex"/>
    <property type="evidence" value="ECO:0007669"/>
    <property type="project" value="TreeGrafter"/>
</dbReference>
<dbReference type="GO" id="GO:0005833">
    <property type="term" value="C:hemoglobin complex"/>
    <property type="evidence" value="ECO:0007669"/>
    <property type="project" value="InterPro"/>
</dbReference>
<dbReference type="GO" id="GO:0031720">
    <property type="term" value="F:haptoglobin binding"/>
    <property type="evidence" value="ECO:0007669"/>
    <property type="project" value="TreeGrafter"/>
</dbReference>
<dbReference type="GO" id="GO:0020037">
    <property type="term" value="F:heme binding"/>
    <property type="evidence" value="ECO:0007669"/>
    <property type="project" value="InterPro"/>
</dbReference>
<dbReference type="GO" id="GO:0046872">
    <property type="term" value="F:metal ion binding"/>
    <property type="evidence" value="ECO:0007669"/>
    <property type="project" value="UniProtKB-KW"/>
</dbReference>
<dbReference type="GO" id="GO:0043177">
    <property type="term" value="F:organic acid binding"/>
    <property type="evidence" value="ECO:0007669"/>
    <property type="project" value="TreeGrafter"/>
</dbReference>
<dbReference type="GO" id="GO:0019825">
    <property type="term" value="F:oxygen binding"/>
    <property type="evidence" value="ECO:0007669"/>
    <property type="project" value="InterPro"/>
</dbReference>
<dbReference type="GO" id="GO:0005344">
    <property type="term" value="F:oxygen carrier activity"/>
    <property type="evidence" value="ECO:0007669"/>
    <property type="project" value="UniProtKB-KW"/>
</dbReference>
<dbReference type="GO" id="GO:0004601">
    <property type="term" value="F:peroxidase activity"/>
    <property type="evidence" value="ECO:0007669"/>
    <property type="project" value="TreeGrafter"/>
</dbReference>
<dbReference type="GO" id="GO:0042744">
    <property type="term" value="P:hydrogen peroxide catabolic process"/>
    <property type="evidence" value="ECO:0007669"/>
    <property type="project" value="TreeGrafter"/>
</dbReference>
<dbReference type="CDD" id="cd08925">
    <property type="entry name" value="Hb-beta-like"/>
    <property type="match status" value="1"/>
</dbReference>
<dbReference type="Gene3D" id="1.10.490.10">
    <property type="entry name" value="Globins"/>
    <property type="match status" value="1"/>
</dbReference>
<dbReference type="InterPro" id="IPR000971">
    <property type="entry name" value="Globin"/>
</dbReference>
<dbReference type="InterPro" id="IPR009050">
    <property type="entry name" value="Globin-like_sf"/>
</dbReference>
<dbReference type="InterPro" id="IPR012292">
    <property type="entry name" value="Globin/Proto"/>
</dbReference>
<dbReference type="InterPro" id="IPR002337">
    <property type="entry name" value="Hemoglobin_b"/>
</dbReference>
<dbReference type="InterPro" id="IPR050056">
    <property type="entry name" value="Hemoglobin_oxygen_transport"/>
</dbReference>
<dbReference type="PANTHER" id="PTHR11442">
    <property type="entry name" value="HEMOGLOBIN FAMILY MEMBER"/>
    <property type="match status" value="1"/>
</dbReference>
<dbReference type="PANTHER" id="PTHR11442:SF7">
    <property type="entry name" value="HEMOGLOBIN SUBUNIT EPSILON"/>
    <property type="match status" value="1"/>
</dbReference>
<dbReference type="Pfam" id="PF00042">
    <property type="entry name" value="Globin"/>
    <property type="match status" value="1"/>
</dbReference>
<dbReference type="PRINTS" id="PR00814">
    <property type="entry name" value="BETAHAEM"/>
</dbReference>
<dbReference type="SUPFAM" id="SSF46458">
    <property type="entry name" value="Globin-like"/>
    <property type="match status" value="1"/>
</dbReference>
<dbReference type="PROSITE" id="PS01033">
    <property type="entry name" value="GLOBIN"/>
    <property type="match status" value="1"/>
</dbReference>